<gene>
    <name type="primary">TTR</name>
</gene>
<feature type="signal peptide" evidence="3">
    <location>
        <begin position="1"/>
        <end position="20"/>
    </location>
</feature>
<feature type="chain" id="PRO_0000035762" description="Transthyretin">
    <location>
        <begin position="21"/>
        <end position="149"/>
    </location>
</feature>
<feature type="binding site" evidence="2">
    <location>
        <position position="37"/>
    </location>
    <ligand>
        <name>L-thyroxine</name>
        <dbReference type="ChEBI" id="CHEBI:58448"/>
    </ligand>
</feature>
<feature type="binding site" evidence="2">
    <location>
        <position position="76"/>
    </location>
    <ligand>
        <name>L-thyroxine</name>
        <dbReference type="ChEBI" id="CHEBI:58448"/>
    </ligand>
</feature>
<feature type="binding site" evidence="2">
    <location>
        <position position="139"/>
    </location>
    <ligand>
        <name>L-thyroxine</name>
        <dbReference type="ChEBI" id="CHEBI:58448"/>
    </ligand>
</feature>
<feature type="modified residue" description="Sulfocysteine" evidence="2">
    <location>
        <position position="32"/>
    </location>
</feature>
<feature type="modified residue" description="4-carboxyglutamate" evidence="2">
    <location>
        <position position="64"/>
    </location>
</feature>
<evidence type="ECO:0000250" key="1"/>
<evidence type="ECO:0000250" key="2">
    <source>
        <dbReference type="UniProtKB" id="P02766"/>
    </source>
</evidence>
<evidence type="ECO:0000255" key="3"/>
<evidence type="ECO:0000269" key="4">
    <source>
    </source>
</evidence>
<evidence type="ECO:0000305" key="5"/>
<name>TTHY_PETBR</name>
<reference key="1">
    <citation type="journal article" date="1995" name="Eur. J. Biochem.">
        <title>Evolution of transthyretin in marsupials.</title>
        <authorList>
            <person name="Duan W."/>
            <person name="Richardson S.J."/>
            <person name="Babon J.J."/>
            <person name="Heyes R.J."/>
            <person name="Southwell B.R."/>
            <person name="Harms P.J."/>
            <person name="Wettenhall R.E.H."/>
            <person name="Dziegielewska K.M."/>
            <person name="Selwood L."/>
            <person name="Bradley A.J."/>
            <person name="Brack C.M."/>
            <person name="Schreiber G."/>
        </authorList>
    </citation>
    <scope>NUCLEOTIDE SEQUENCE [MRNA]</scope>
    <scope>FUNCTION</scope>
    <scope>TISSUE SPECIFICITY</scope>
    <scope>SUBCELLULAR LOCATION</scope>
    <source>
        <tissue>Liver</tissue>
    </source>
</reference>
<sequence>MAFHSLLLLCLAGLLFVSEAGPVAHGGEDSKCPLMVKVLDAVRGRPAVNVDVKVFKKTEKQTWELFASGKTNDNGEIHELTSDDKFGEGLYKVEFDTISYWKALGVSPFHEYADVVFTANDAGHRHYTIAAQLSPYSFSTTAIVSNPTE</sequence>
<accession>P49142</accession>
<protein>
    <recommendedName>
        <fullName>Transthyretin</fullName>
    </recommendedName>
    <alternativeName>
        <fullName>Prealbumin</fullName>
    </alternativeName>
</protein>
<dbReference type="EMBL" id="U12517">
    <property type="protein sequence ID" value="AAA86054.1"/>
    <property type="molecule type" value="mRNA"/>
</dbReference>
<dbReference type="EMBL" id="X80999">
    <property type="protein sequence ID" value="CAA56926.1"/>
    <property type="molecule type" value="mRNA"/>
</dbReference>
<dbReference type="PIR" id="S67471">
    <property type="entry name" value="S67471"/>
</dbReference>
<dbReference type="SMR" id="P49142"/>
<dbReference type="GO" id="GO:0005615">
    <property type="term" value="C:extracellular space"/>
    <property type="evidence" value="ECO:0007669"/>
    <property type="project" value="TreeGrafter"/>
</dbReference>
<dbReference type="GO" id="GO:0005179">
    <property type="term" value="F:hormone activity"/>
    <property type="evidence" value="ECO:0007669"/>
    <property type="project" value="UniProtKB-KW"/>
</dbReference>
<dbReference type="GO" id="GO:0070324">
    <property type="term" value="F:thyroid hormone binding"/>
    <property type="evidence" value="ECO:0007669"/>
    <property type="project" value="TreeGrafter"/>
</dbReference>
<dbReference type="GO" id="GO:0006144">
    <property type="term" value="P:purine nucleobase metabolic process"/>
    <property type="evidence" value="ECO:0007669"/>
    <property type="project" value="TreeGrafter"/>
</dbReference>
<dbReference type="FunFam" id="2.60.40.180:FF:000002">
    <property type="entry name" value="Transthyretin"/>
    <property type="match status" value="1"/>
</dbReference>
<dbReference type="Gene3D" id="2.60.40.180">
    <property type="entry name" value="Transthyretin/hydroxyisourate hydrolase domain"/>
    <property type="match status" value="1"/>
</dbReference>
<dbReference type="InterPro" id="IPR023418">
    <property type="entry name" value="Thyroxine_BS"/>
</dbReference>
<dbReference type="InterPro" id="IPR000895">
    <property type="entry name" value="Transthyretin/HIU_hydrolase"/>
</dbReference>
<dbReference type="InterPro" id="IPR023416">
    <property type="entry name" value="Transthyretin/HIU_hydrolase_d"/>
</dbReference>
<dbReference type="InterPro" id="IPR036817">
    <property type="entry name" value="Transthyretin/HIU_hydrolase_sf"/>
</dbReference>
<dbReference type="InterPro" id="IPR023419">
    <property type="entry name" value="Transthyretin_CS"/>
</dbReference>
<dbReference type="PANTHER" id="PTHR10395:SF12">
    <property type="entry name" value="TRANSTHYRETIN"/>
    <property type="match status" value="1"/>
</dbReference>
<dbReference type="PANTHER" id="PTHR10395">
    <property type="entry name" value="URICASE AND TRANSTHYRETIN-RELATED"/>
    <property type="match status" value="1"/>
</dbReference>
<dbReference type="Pfam" id="PF00576">
    <property type="entry name" value="Transthyretin"/>
    <property type="match status" value="1"/>
</dbReference>
<dbReference type="PRINTS" id="PR00189">
    <property type="entry name" value="TRNSTHYRETIN"/>
</dbReference>
<dbReference type="SMART" id="SM00095">
    <property type="entry name" value="TR_THY"/>
    <property type="match status" value="1"/>
</dbReference>
<dbReference type="SUPFAM" id="SSF49472">
    <property type="entry name" value="Transthyretin (synonym: prealbumin)"/>
    <property type="match status" value="1"/>
</dbReference>
<dbReference type="PROSITE" id="PS00768">
    <property type="entry name" value="TRANSTHYRETIN_1"/>
    <property type="match status" value="1"/>
</dbReference>
<dbReference type="PROSITE" id="PS00769">
    <property type="entry name" value="TRANSTHYRETIN_2"/>
    <property type="match status" value="1"/>
</dbReference>
<keyword id="KW-0301">Gamma-carboxyglutamic acid</keyword>
<keyword id="KW-0372">Hormone</keyword>
<keyword id="KW-0964">Secreted</keyword>
<keyword id="KW-0732">Signal</keyword>
<keyword id="KW-0765">Sulfation</keyword>
<keyword id="KW-0795">Thyroid hormone</keyword>
<keyword id="KW-0813">Transport</keyword>
<organism>
    <name type="scientific">Petaurus breviceps</name>
    <name type="common">Australian sugar glider</name>
    <dbReference type="NCBI Taxonomy" id="34899"/>
    <lineage>
        <taxon>Eukaryota</taxon>
        <taxon>Metazoa</taxon>
        <taxon>Chordata</taxon>
        <taxon>Craniata</taxon>
        <taxon>Vertebrata</taxon>
        <taxon>Euteleostomi</taxon>
        <taxon>Mammalia</taxon>
        <taxon>Metatheria</taxon>
        <taxon>Diprotodontia</taxon>
        <taxon>Petauridae</taxon>
        <taxon>Petaurus</taxon>
    </lineage>
</organism>
<comment type="function">
    <text evidence="4">Thyroid hormone-binding protein. Probably transports thyroxine from the bloodstream to the brain.</text>
</comment>
<comment type="subunit">
    <text evidence="1">Homotetramer. Dimer of dimers. In the homotetramer, subunits assemble around a central channel that can accommodate two ligand molecules. Interacts with RBP4 (By similarity).</text>
</comment>
<comment type="subcellular location">
    <subcellularLocation>
        <location evidence="4">Secreted</location>
    </subcellularLocation>
</comment>
<comment type="tissue specificity">
    <text evidence="4">Detected in plasma (at protein level). Detected in liver.</text>
</comment>
<comment type="PTM">
    <text evidence="2">Sulfonation of the reactive cysteine Cys-32 enhances the stability of the native conformation of TTR, avoiding misassembly of the protein leading to amyloid formation.</text>
</comment>
<comment type="similarity">
    <text evidence="5">Belongs to the transthyretin family.</text>
</comment>
<proteinExistence type="evidence at protein level"/>